<feature type="chain" id="PRO_0000050196" description="Paired box protein Pax-8">
    <location>
        <begin position="1"/>
        <end position="459"/>
    </location>
</feature>
<feature type="DNA-binding region" description="Paired" evidence="3">
    <location>
        <begin position="9"/>
        <end position="135"/>
    </location>
</feature>
<feature type="region of interest" description="PAI subdomain" evidence="3">
    <location>
        <begin position="12"/>
        <end position="68"/>
    </location>
</feature>
<feature type="region of interest" description="RED subdomain" evidence="3">
    <location>
        <begin position="87"/>
        <end position="135"/>
    </location>
</feature>
<feature type="region of interest" description="Disordered" evidence="4">
    <location>
        <begin position="159"/>
        <end position="223"/>
    </location>
</feature>
<feature type="compositionally biased region" description="Polar residues" evidence="4">
    <location>
        <begin position="159"/>
        <end position="182"/>
    </location>
</feature>
<feature type="modified residue" description="Phosphoserine" evidence="2">
    <location>
        <position position="305"/>
    </location>
</feature>
<feature type="splice variant" id="VSP_002371" description="In isoform 8G." evidence="5">
    <original>DPHSPFAIKQETPEVSSSSSTPSSLSSSAFLDLQQVGGAGVPAGASVPPFNAFPHAASVYGQFTGQALLSGREMVGPTLPGYPPHIPTSGQGSYASSAIAGMVAGSEYSGNAYGHTPYSSYGEAWRFPNSSLLSSPYYYSSTSRPSAPPTTATAFDHL</original>
    <variation>APPFWICSKSAAPGSQPVPRSRPSMPFPMLPPCTGSSRARPSSQGERWWDPHCPDTHPTSPPVDRAAMPLLPSQAWWQVPHIITVPHQGQVRHPPPPRPLTICSCYGDSGSN</variation>
    <location>
        <begin position="302"/>
        <end position="459"/>
    </location>
</feature>
<proteinExistence type="evidence at transcript level"/>
<protein>
    <recommendedName>
        <fullName>Paired box protein Pax-8</fullName>
    </recommendedName>
</protein>
<gene>
    <name type="primary">PAX8</name>
    <name type="synonym">PAX-8</name>
</gene>
<reference key="1">
    <citation type="journal article" date="1996" name="Biochim. Biophys. Acta">
        <title>Pax 8 expression in primary cultured dog thyrocyte is increased by cyclic AMP.</title>
        <authorList>
            <person name="van Renterghem P.H.G."/>
            <person name="Vassart G."/>
            <person name="Christophe D."/>
        </authorList>
    </citation>
    <scope>NUCLEOTIDE SEQUENCE [MRNA] (ISOFORMS 8A AND 8G)</scope>
    <source>
        <tissue>Thyroid</tissue>
    </source>
</reference>
<evidence type="ECO:0000250" key="1"/>
<evidence type="ECO:0000250" key="2">
    <source>
        <dbReference type="UniProtKB" id="Q00288"/>
    </source>
</evidence>
<evidence type="ECO:0000255" key="3">
    <source>
        <dbReference type="PROSITE-ProRule" id="PRU00381"/>
    </source>
</evidence>
<evidence type="ECO:0000256" key="4">
    <source>
        <dbReference type="SAM" id="MobiDB-lite"/>
    </source>
</evidence>
<evidence type="ECO:0000303" key="5">
    <source>
    </source>
</evidence>
<sequence>MPHNSIRSGHGGLNQLGGAFVNGRPLPEVVRQRIVDLAHQGVRPCDISRQLRVSHGCVSKILGRYYETGSIRPGVIGGSKPKVATPKVVEKIGDYKRQNPTMFAWEIRDRLLAEGVCDNDTVPSVSSINRIIRTKVQQPFNLPMDSCVATKSLSPGHTLIPSSAVTPPESPQSDSLGSTYSINGLLGIAQPGSDSKRKMDDSDQDSCRLSIDSQSSSSGPRKHLRTDAFSQHHLEPLECPFERQHYPEAYASPSHTKGEQGLYPLPLLNSAALDDGKATLTPSNTPLGRNLSTHQTYPVVADPHSPFAIKQETPEVSSSSSTPSSLSSSAFLDLQQVGGAGVPAGASVPPFNAFPHAASVYGQFTGQALLSGREMVGPTLPGYPPHIPTSGQGSYASSAIAGMVAGSEYSGNAYGHTPYSSYGEAWRFPNSSLLSSPYYYSSTSRPSAPPTTATAFDHL</sequence>
<keyword id="KW-0025">Alternative splicing</keyword>
<keyword id="KW-0217">Developmental protein</keyword>
<keyword id="KW-0221">Differentiation</keyword>
<keyword id="KW-0238">DNA-binding</keyword>
<keyword id="KW-0539">Nucleus</keyword>
<keyword id="KW-0563">Paired box</keyword>
<keyword id="KW-0597">Phosphoprotein</keyword>
<keyword id="KW-1185">Reference proteome</keyword>
<keyword id="KW-0804">Transcription</keyword>
<keyword id="KW-0805">Transcription regulation</keyword>
<accession>P47240</accession>
<accession>P47241</accession>
<comment type="function">
    <text>Thought to encode a transcription factor. It may have a role in kidney cell differentiation. May play a regulatory role in mammalian development.</text>
</comment>
<comment type="subunit">
    <text evidence="1">Interacts with WWTR1.</text>
</comment>
<comment type="subcellular location">
    <subcellularLocation>
        <location>Nucleus</location>
    </subcellularLocation>
</comment>
<comment type="alternative products">
    <event type="alternative splicing"/>
    <isoform>
        <id>P47240-1</id>
        <name>8A</name>
        <sequence type="displayed"/>
    </isoform>
    <isoform>
        <id>P47240-2</id>
        <name>8G</name>
        <sequence type="described" ref="VSP_002371"/>
    </isoform>
</comment>
<name>PAX8_CANLF</name>
<dbReference type="EMBL" id="X83591">
    <property type="protein sequence ID" value="CAA58571.1"/>
    <property type="molecule type" value="mRNA"/>
</dbReference>
<dbReference type="EMBL" id="X83592">
    <property type="protein sequence ID" value="CAA58572.1"/>
    <property type="molecule type" value="mRNA"/>
</dbReference>
<dbReference type="PIR" id="S70361">
    <property type="entry name" value="S52250"/>
</dbReference>
<dbReference type="PIR" id="S70362">
    <property type="entry name" value="S52251"/>
</dbReference>
<dbReference type="RefSeq" id="NP_001003248.1">
    <property type="nucleotide sequence ID" value="NM_001003248.1"/>
</dbReference>
<dbReference type="RefSeq" id="NP_001376149.1">
    <molecule id="P47240-1"/>
    <property type="nucleotide sequence ID" value="NM_001389220.1"/>
</dbReference>
<dbReference type="BMRB" id="P47240"/>
<dbReference type="SMR" id="P47240"/>
<dbReference type="FunCoup" id="P47240">
    <property type="interactions" value="10"/>
</dbReference>
<dbReference type="STRING" id="9615.ENSCAFP00000010846"/>
<dbReference type="PaxDb" id="9612-ENSCAFP00000010846"/>
<dbReference type="Ensembl" id="ENSCAFT00000011697.6">
    <molecule id="P47240-1"/>
    <property type="protein sequence ID" value="ENSCAFP00000010840.3"/>
    <property type="gene ID" value="ENSCAFG00000007309.6"/>
</dbReference>
<dbReference type="Ensembl" id="ENSCAFT00030010430.1">
    <molecule id="P47240-1"/>
    <property type="protein sequence ID" value="ENSCAFP00030009137.1"/>
    <property type="gene ID" value="ENSCAFG00030005671.1"/>
</dbReference>
<dbReference type="Ensembl" id="ENSCAFT00040025689.1">
    <molecule id="P47240-1"/>
    <property type="protein sequence ID" value="ENSCAFP00040022340.1"/>
    <property type="gene ID" value="ENSCAFG00040013848.1"/>
</dbReference>
<dbReference type="Ensembl" id="ENSCAFT00845021871.1">
    <molecule id="P47240-1"/>
    <property type="protein sequence ID" value="ENSCAFP00845017204.1"/>
    <property type="gene ID" value="ENSCAFG00845012268.1"/>
</dbReference>
<dbReference type="GeneID" id="403927"/>
<dbReference type="VEuPathDB" id="HostDB:ENSCAFG00845012268"/>
<dbReference type="eggNOG" id="KOG3862">
    <property type="taxonomic scope" value="Eukaryota"/>
</dbReference>
<dbReference type="GeneTree" id="ENSGT00940000161868"/>
<dbReference type="HOGENOM" id="CLU_019281_4_0_1"/>
<dbReference type="InParanoid" id="P47240"/>
<dbReference type="OMA" id="CNISCYA"/>
<dbReference type="OrthoDB" id="3225452at2759"/>
<dbReference type="TreeFam" id="TF315397"/>
<dbReference type="Proteomes" id="UP000002254">
    <property type="component" value="Chromosome 17"/>
</dbReference>
<dbReference type="Proteomes" id="UP000694429">
    <property type="component" value="Chromosome 17"/>
</dbReference>
<dbReference type="Proteomes" id="UP000694542">
    <property type="component" value="Chromosome 17"/>
</dbReference>
<dbReference type="Proteomes" id="UP000805418">
    <property type="component" value="Chromosome 17"/>
</dbReference>
<dbReference type="Bgee" id="ENSCAFG00000007309">
    <property type="expression patterns" value="Expressed in kidney and 30 other cell types or tissues"/>
</dbReference>
<dbReference type="GO" id="GO:0005654">
    <property type="term" value="C:nucleoplasm"/>
    <property type="evidence" value="ECO:0000250"/>
    <property type="project" value="UniProtKB"/>
</dbReference>
<dbReference type="GO" id="GO:0005634">
    <property type="term" value="C:nucleus"/>
    <property type="evidence" value="ECO:0000250"/>
    <property type="project" value="UniProtKB"/>
</dbReference>
<dbReference type="GO" id="GO:0003677">
    <property type="term" value="F:DNA binding"/>
    <property type="evidence" value="ECO:0000250"/>
    <property type="project" value="UniProtKB"/>
</dbReference>
<dbReference type="GO" id="GO:0003700">
    <property type="term" value="F:DNA-binding transcription factor activity"/>
    <property type="evidence" value="ECO:0000250"/>
    <property type="project" value="UniProtKB"/>
</dbReference>
<dbReference type="GO" id="GO:0000981">
    <property type="term" value="F:DNA-binding transcription factor activity, RNA polymerase II-specific"/>
    <property type="evidence" value="ECO:0000318"/>
    <property type="project" value="GO_Central"/>
</dbReference>
<dbReference type="GO" id="GO:0000978">
    <property type="term" value="F:RNA polymerase II cis-regulatory region sequence-specific DNA binding"/>
    <property type="evidence" value="ECO:0000250"/>
    <property type="project" value="UniProtKB"/>
</dbReference>
<dbReference type="GO" id="GO:0000976">
    <property type="term" value="F:transcription cis-regulatory region binding"/>
    <property type="evidence" value="ECO:0000250"/>
    <property type="project" value="UniProtKB"/>
</dbReference>
<dbReference type="GO" id="GO:0030154">
    <property type="term" value="P:cell differentiation"/>
    <property type="evidence" value="ECO:0007669"/>
    <property type="project" value="UniProtKB-KW"/>
</dbReference>
<dbReference type="GO" id="GO:0001823">
    <property type="term" value="P:mesonephros development"/>
    <property type="evidence" value="ECO:0000250"/>
    <property type="project" value="UniProtKB"/>
</dbReference>
<dbReference type="GO" id="GO:0072221">
    <property type="term" value="P:metanephric distal convoluted tubule development"/>
    <property type="evidence" value="ECO:0000250"/>
    <property type="project" value="UniProtKB"/>
</dbReference>
<dbReference type="GO" id="GO:0072289">
    <property type="term" value="P:metanephric nephron tubule formation"/>
    <property type="evidence" value="ECO:0000250"/>
    <property type="project" value="UniProtKB"/>
</dbReference>
<dbReference type="GO" id="GO:1900215">
    <property type="term" value="P:negative regulation of apoptotic process involved in metanephric collecting duct development"/>
    <property type="evidence" value="ECO:0000250"/>
    <property type="project" value="UniProtKB"/>
</dbReference>
<dbReference type="GO" id="GO:1900218">
    <property type="term" value="P:negative regulation of apoptotic process involved in metanephric nephron tubule development"/>
    <property type="evidence" value="ECO:0000250"/>
    <property type="project" value="UniProtKB"/>
</dbReference>
<dbReference type="GO" id="GO:0072305">
    <property type="term" value="P:negative regulation of mesenchymal cell apoptotic process involved in metanephric nephron morphogenesis"/>
    <property type="evidence" value="ECO:0000250"/>
    <property type="project" value="UniProtKB"/>
</dbReference>
<dbReference type="GO" id="GO:1900212">
    <property type="term" value="P:negative regulation of mesenchymal cell apoptotic process involved in metanephros development"/>
    <property type="evidence" value="ECO:0000250"/>
    <property type="project" value="UniProtKB"/>
</dbReference>
<dbReference type="GO" id="GO:0007399">
    <property type="term" value="P:nervous system development"/>
    <property type="evidence" value="ECO:0000318"/>
    <property type="project" value="GO_Central"/>
</dbReference>
<dbReference type="GO" id="GO:0090190">
    <property type="term" value="P:positive regulation of branching involved in ureteric bud morphogenesis"/>
    <property type="evidence" value="ECO:0000250"/>
    <property type="project" value="UniProtKB"/>
</dbReference>
<dbReference type="GO" id="GO:0045893">
    <property type="term" value="P:positive regulation of DNA-templated transcription"/>
    <property type="evidence" value="ECO:0000250"/>
    <property type="project" value="UniProtKB"/>
</dbReference>
<dbReference type="GO" id="GO:0072108">
    <property type="term" value="P:positive regulation of mesenchymal to epithelial transition involved in metanephros morphogenesis"/>
    <property type="evidence" value="ECO:0000250"/>
    <property type="project" value="UniProtKB"/>
</dbReference>
<dbReference type="GO" id="GO:2000594">
    <property type="term" value="P:positive regulation of metanephric DCT cell differentiation"/>
    <property type="evidence" value="ECO:0000250"/>
    <property type="project" value="UniProtKB"/>
</dbReference>
<dbReference type="GO" id="GO:2000611">
    <property type="term" value="P:positive regulation of thyroid hormone generation"/>
    <property type="evidence" value="ECO:0000250"/>
    <property type="project" value="UniProtKB"/>
</dbReference>
<dbReference type="GO" id="GO:0039003">
    <property type="term" value="P:pronephric field specification"/>
    <property type="evidence" value="ECO:0000250"/>
    <property type="project" value="UniProtKB"/>
</dbReference>
<dbReference type="GO" id="GO:0048793">
    <property type="term" value="P:pronephros development"/>
    <property type="evidence" value="ECO:0000250"/>
    <property type="project" value="UniProtKB"/>
</dbReference>
<dbReference type="GO" id="GO:0042981">
    <property type="term" value="P:regulation of apoptotic process"/>
    <property type="evidence" value="ECO:0000250"/>
    <property type="project" value="UniProtKB"/>
</dbReference>
<dbReference type="GO" id="GO:0072307">
    <property type="term" value="P:regulation of metanephric nephron tubule epithelial cell differentiation"/>
    <property type="evidence" value="ECO:0000250"/>
    <property type="project" value="UniProtKB"/>
</dbReference>
<dbReference type="GO" id="GO:2000612">
    <property type="term" value="P:regulation of thyroid-stimulating hormone secretion"/>
    <property type="evidence" value="ECO:0000250"/>
    <property type="project" value="UniProtKB"/>
</dbReference>
<dbReference type="GO" id="GO:0006357">
    <property type="term" value="P:regulation of transcription by RNA polymerase II"/>
    <property type="evidence" value="ECO:0000318"/>
    <property type="project" value="GO_Central"/>
</dbReference>
<dbReference type="GO" id="GO:0007423">
    <property type="term" value="P:sensory organ development"/>
    <property type="evidence" value="ECO:0000318"/>
    <property type="project" value="GO_Central"/>
</dbReference>
<dbReference type="GO" id="GO:0030878">
    <property type="term" value="P:thyroid gland development"/>
    <property type="evidence" value="ECO:0000250"/>
    <property type="project" value="UniProtKB"/>
</dbReference>
<dbReference type="GO" id="GO:0001655">
    <property type="term" value="P:urogenital system development"/>
    <property type="evidence" value="ECO:0000250"/>
    <property type="project" value="UniProtKB"/>
</dbReference>
<dbReference type="CDD" id="cd00131">
    <property type="entry name" value="PAX"/>
    <property type="match status" value="1"/>
</dbReference>
<dbReference type="FunFam" id="1.10.10.10:FF:000013">
    <property type="entry name" value="Paired box 8 isoform 1"/>
    <property type="match status" value="1"/>
</dbReference>
<dbReference type="FunFam" id="1.10.10.10:FF:000003">
    <property type="entry name" value="Paired box protein Pax-6"/>
    <property type="match status" value="1"/>
</dbReference>
<dbReference type="Gene3D" id="1.10.10.10">
    <property type="entry name" value="Winged helix-like DNA-binding domain superfamily/Winged helix DNA-binding domain"/>
    <property type="match status" value="2"/>
</dbReference>
<dbReference type="InterPro" id="IPR009057">
    <property type="entry name" value="Homeodomain-like_sf"/>
</dbReference>
<dbReference type="InterPro" id="IPR043182">
    <property type="entry name" value="PAIRED_DNA-bd_dom"/>
</dbReference>
<dbReference type="InterPro" id="IPR001523">
    <property type="entry name" value="Paired_dom"/>
</dbReference>
<dbReference type="InterPro" id="IPR022130">
    <property type="entry name" value="Pax2_C"/>
</dbReference>
<dbReference type="InterPro" id="IPR043565">
    <property type="entry name" value="PAX_fam"/>
</dbReference>
<dbReference type="InterPro" id="IPR036388">
    <property type="entry name" value="WH-like_DNA-bd_sf"/>
</dbReference>
<dbReference type="PANTHER" id="PTHR45636">
    <property type="entry name" value="PAIRED BOX PROTEIN PAX-6-RELATED-RELATED"/>
    <property type="match status" value="1"/>
</dbReference>
<dbReference type="PANTHER" id="PTHR45636:SF6">
    <property type="entry name" value="PAIRED BOX PROTEIN PAX-8"/>
    <property type="match status" value="1"/>
</dbReference>
<dbReference type="Pfam" id="PF00292">
    <property type="entry name" value="PAX"/>
    <property type="match status" value="1"/>
</dbReference>
<dbReference type="Pfam" id="PF12403">
    <property type="entry name" value="Pax2_C"/>
    <property type="match status" value="1"/>
</dbReference>
<dbReference type="PRINTS" id="PR00027">
    <property type="entry name" value="PAIREDBOX"/>
</dbReference>
<dbReference type="SMART" id="SM00351">
    <property type="entry name" value="PAX"/>
    <property type="match status" value="1"/>
</dbReference>
<dbReference type="SUPFAM" id="SSF46689">
    <property type="entry name" value="Homeodomain-like"/>
    <property type="match status" value="1"/>
</dbReference>
<dbReference type="PROSITE" id="PS00034">
    <property type="entry name" value="PAIRED_1"/>
    <property type="match status" value="1"/>
</dbReference>
<dbReference type="PROSITE" id="PS51057">
    <property type="entry name" value="PAIRED_2"/>
    <property type="match status" value="1"/>
</dbReference>
<organism>
    <name type="scientific">Canis lupus familiaris</name>
    <name type="common">Dog</name>
    <name type="synonym">Canis familiaris</name>
    <dbReference type="NCBI Taxonomy" id="9615"/>
    <lineage>
        <taxon>Eukaryota</taxon>
        <taxon>Metazoa</taxon>
        <taxon>Chordata</taxon>
        <taxon>Craniata</taxon>
        <taxon>Vertebrata</taxon>
        <taxon>Euteleostomi</taxon>
        <taxon>Mammalia</taxon>
        <taxon>Eutheria</taxon>
        <taxon>Laurasiatheria</taxon>
        <taxon>Carnivora</taxon>
        <taxon>Caniformia</taxon>
        <taxon>Canidae</taxon>
        <taxon>Canis</taxon>
    </lineage>
</organism>